<name>DB113_HUMAN</name>
<sequence length="82" mass="9640">MKILCIFLTFVFTVSCGPSVPQKKTREVAERKRECQLVRGACKPECNSWEYVYYYCNVNPCCAVWEYQKPIINKITSKLHQK</sequence>
<gene>
    <name type="primary">DEFB113</name>
    <name type="synonym">DEFB13</name>
</gene>
<proteinExistence type="inferred from homology"/>
<dbReference type="EMBL" id="DQ012017">
    <property type="protein sequence ID" value="AAY59753.1"/>
    <property type="molecule type" value="mRNA"/>
</dbReference>
<dbReference type="CCDS" id="CCDS43472.1"/>
<dbReference type="RefSeq" id="NP_001032818.1">
    <property type="nucleotide sequence ID" value="NM_001037729.1"/>
</dbReference>
<dbReference type="SMR" id="Q30KQ7"/>
<dbReference type="STRING" id="9606.ENSP00000381703"/>
<dbReference type="PhosphoSitePlus" id="Q30KQ7"/>
<dbReference type="BioMuta" id="DEFB113"/>
<dbReference type="PaxDb" id="9606-ENSP00000381703"/>
<dbReference type="DNASU" id="245927"/>
<dbReference type="Ensembl" id="ENST00000398718.1">
    <property type="protein sequence ID" value="ENSP00000381703.1"/>
    <property type="gene ID" value="ENSG00000214642.1"/>
</dbReference>
<dbReference type="GeneID" id="245927"/>
<dbReference type="KEGG" id="hsa:245927"/>
<dbReference type="MANE-Select" id="ENST00000398718.1">
    <property type="protein sequence ID" value="ENSP00000381703.1"/>
    <property type="RefSeq nucleotide sequence ID" value="NM_001037729.1"/>
    <property type="RefSeq protein sequence ID" value="NP_001032818.1"/>
</dbReference>
<dbReference type="UCSC" id="uc011dwq.2">
    <property type="organism name" value="human"/>
</dbReference>
<dbReference type="AGR" id="HGNC:18094"/>
<dbReference type="CTD" id="245927"/>
<dbReference type="GeneCards" id="DEFB113"/>
<dbReference type="HGNC" id="HGNC:18094">
    <property type="gene designation" value="DEFB113"/>
</dbReference>
<dbReference type="HPA" id="ENSG00000214642">
    <property type="expression patterns" value="Tissue enriched (epididymis)"/>
</dbReference>
<dbReference type="neXtProt" id="NX_Q30KQ7"/>
<dbReference type="PharmGKB" id="PA38490"/>
<dbReference type="VEuPathDB" id="HostDB:ENSG00000214642"/>
<dbReference type="eggNOG" id="ENOG502TEDM">
    <property type="taxonomic scope" value="Eukaryota"/>
</dbReference>
<dbReference type="GeneTree" id="ENSGT00400000023306"/>
<dbReference type="HOGENOM" id="CLU_169780_0_0_1"/>
<dbReference type="InParanoid" id="Q30KQ7"/>
<dbReference type="OMA" id="GACKPEC"/>
<dbReference type="OrthoDB" id="9834241at2759"/>
<dbReference type="PAN-GO" id="Q30KQ7">
    <property type="GO annotations" value="0 GO annotations based on evolutionary models"/>
</dbReference>
<dbReference type="PhylomeDB" id="Q30KQ7"/>
<dbReference type="PathwayCommons" id="Q30KQ7"/>
<dbReference type="Reactome" id="R-HSA-1461957">
    <property type="pathway name" value="Beta defensins"/>
</dbReference>
<dbReference type="Reactome" id="R-HSA-1461973">
    <property type="pathway name" value="Defensins"/>
</dbReference>
<dbReference type="SignaLink" id="Q30KQ7"/>
<dbReference type="BioGRID-ORCS" id="245927">
    <property type="hits" value="8 hits in 1138 CRISPR screens"/>
</dbReference>
<dbReference type="GenomeRNAi" id="245927"/>
<dbReference type="Pharos" id="Q30KQ7">
    <property type="development level" value="Tdark"/>
</dbReference>
<dbReference type="PRO" id="PR:Q30KQ7"/>
<dbReference type="Proteomes" id="UP000005640">
    <property type="component" value="Chromosome 6"/>
</dbReference>
<dbReference type="RNAct" id="Q30KQ7">
    <property type="molecule type" value="protein"/>
</dbReference>
<dbReference type="Bgee" id="ENSG00000214642">
    <property type="expression patterns" value="Expressed in cell and 14 other cell types or tissues"/>
</dbReference>
<dbReference type="GO" id="GO:0005576">
    <property type="term" value="C:extracellular region"/>
    <property type="evidence" value="ECO:0007669"/>
    <property type="project" value="UniProtKB-SubCell"/>
</dbReference>
<dbReference type="GO" id="GO:0042742">
    <property type="term" value="P:defense response to bacterium"/>
    <property type="evidence" value="ECO:0007669"/>
    <property type="project" value="UniProtKB-KW"/>
</dbReference>
<dbReference type="GO" id="GO:0045087">
    <property type="term" value="P:innate immune response"/>
    <property type="evidence" value="ECO:0007669"/>
    <property type="project" value="InterPro"/>
</dbReference>
<dbReference type="InterPro" id="IPR025933">
    <property type="entry name" value="Beta_defensin_dom"/>
</dbReference>
<dbReference type="PANTHER" id="PTHR39411">
    <property type="entry name" value="BETA-DEFENSIN 113"/>
    <property type="match status" value="1"/>
</dbReference>
<dbReference type="PANTHER" id="PTHR39411:SF1">
    <property type="entry name" value="BETA-DEFENSIN 113"/>
    <property type="match status" value="1"/>
</dbReference>
<dbReference type="Pfam" id="PF13841">
    <property type="entry name" value="Defensin_beta_2"/>
    <property type="match status" value="1"/>
</dbReference>
<comment type="function">
    <text evidence="1">Has antibacterial activity.</text>
</comment>
<comment type="subcellular location">
    <subcellularLocation>
        <location evidence="1">Secreted</location>
    </subcellularLocation>
</comment>
<comment type="similarity">
    <text evidence="3">Belongs to the beta-defensin family.</text>
</comment>
<organism>
    <name type="scientific">Homo sapiens</name>
    <name type="common">Human</name>
    <dbReference type="NCBI Taxonomy" id="9606"/>
    <lineage>
        <taxon>Eukaryota</taxon>
        <taxon>Metazoa</taxon>
        <taxon>Chordata</taxon>
        <taxon>Craniata</taxon>
        <taxon>Vertebrata</taxon>
        <taxon>Euteleostomi</taxon>
        <taxon>Mammalia</taxon>
        <taxon>Eutheria</taxon>
        <taxon>Euarchontoglires</taxon>
        <taxon>Primates</taxon>
        <taxon>Haplorrhini</taxon>
        <taxon>Catarrhini</taxon>
        <taxon>Hominidae</taxon>
        <taxon>Homo</taxon>
    </lineage>
</organism>
<feature type="signal peptide" evidence="2">
    <location>
        <begin position="1"/>
        <end position="16"/>
    </location>
</feature>
<feature type="chain" id="PRO_0000045340" description="Beta-defensin 113">
    <location>
        <begin position="17"/>
        <end position="82"/>
    </location>
</feature>
<feature type="disulfide bond" evidence="1">
    <location>
        <begin position="35"/>
        <end position="61"/>
    </location>
</feature>
<feature type="disulfide bond" evidence="1">
    <location>
        <begin position="42"/>
        <end position="56"/>
    </location>
</feature>
<feature type="disulfide bond" evidence="1">
    <location>
        <begin position="46"/>
        <end position="62"/>
    </location>
</feature>
<protein>
    <recommendedName>
        <fullName>Beta-defensin 113</fullName>
    </recommendedName>
    <alternativeName>
        <fullName>Beta-defensin 13</fullName>
        <shortName>DEFB-13</shortName>
    </alternativeName>
    <alternativeName>
        <fullName>Defensin, beta 113</fullName>
    </alternativeName>
</protein>
<reference key="1">
    <citation type="journal article" date="2005" name="Physiol. Genomics">
        <title>Cross-species analysis of the mammalian beta-defensin gene family: presence of syntenic gene clusters and preferential expression in the male reproductive tract.</title>
        <authorList>
            <person name="Patil A.A."/>
            <person name="Cai Y."/>
            <person name="Sang Y."/>
            <person name="Blecha F."/>
            <person name="Zhang G."/>
        </authorList>
    </citation>
    <scope>NUCLEOTIDE SEQUENCE [MRNA]</scope>
</reference>
<evidence type="ECO:0000250" key="1"/>
<evidence type="ECO:0000255" key="2"/>
<evidence type="ECO:0000305" key="3"/>
<accession>Q30KQ7</accession>
<keyword id="KW-0044">Antibiotic</keyword>
<keyword id="KW-0929">Antimicrobial</keyword>
<keyword id="KW-0211">Defensin</keyword>
<keyword id="KW-1015">Disulfide bond</keyword>
<keyword id="KW-1185">Reference proteome</keyword>
<keyword id="KW-0964">Secreted</keyword>
<keyword id="KW-0732">Signal</keyword>